<comment type="catalytic activity">
    <reaction evidence="1">
        <text>5-amino-1-(5-phospho-D-ribosyl)imidazole-4-carboxylate + L-aspartate + ATP = (2S)-2-[5-amino-1-(5-phospho-beta-D-ribosyl)imidazole-4-carboxamido]succinate + ADP + phosphate + 2 H(+)</text>
        <dbReference type="Rhea" id="RHEA:22628"/>
        <dbReference type="ChEBI" id="CHEBI:15378"/>
        <dbReference type="ChEBI" id="CHEBI:29991"/>
        <dbReference type="ChEBI" id="CHEBI:30616"/>
        <dbReference type="ChEBI" id="CHEBI:43474"/>
        <dbReference type="ChEBI" id="CHEBI:58443"/>
        <dbReference type="ChEBI" id="CHEBI:77657"/>
        <dbReference type="ChEBI" id="CHEBI:456216"/>
        <dbReference type="EC" id="6.3.2.6"/>
    </reaction>
</comment>
<comment type="pathway">
    <text evidence="1">Purine metabolism; IMP biosynthesis via de novo pathway; 5-amino-1-(5-phospho-D-ribosyl)imidazole-4-carboxamide from 5-amino-1-(5-phospho-D-ribosyl)imidazole-4-carboxylate: step 1/2.</text>
</comment>
<comment type="similarity">
    <text evidence="1">Belongs to the SAICAR synthetase family.</text>
</comment>
<gene>
    <name evidence="1" type="primary">purC</name>
    <name type="ordered locus">RSc0574</name>
    <name type="ORF">RS04891</name>
</gene>
<protein>
    <recommendedName>
        <fullName evidence="1">Phosphoribosylaminoimidazole-succinocarboxamide synthase</fullName>
        <ecNumber evidence="1">6.3.2.6</ecNumber>
    </recommendedName>
    <alternativeName>
        <fullName evidence="1">SAICAR synthetase</fullName>
    </alternativeName>
</protein>
<name>PUR7_RALN1</name>
<keyword id="KW-0067">ATP-binding</keyword>
<keyword id="KW-0436">Ligase</keyword>
<keyword id="KW-0547">Nucleotide-binding</keyword>
<keyword id="KW-0658">Purine biosynthesis</keyword>
<keyword id="KW-1185">Reference proteome</keyword>
<feature type="chain" id="PRO_0000100858" description="Phosphoribosylaminoimidazole-succinocarboxamide synthase">
    <location>
        <begin position="1"/>
        <end position="302"/>
    </location>
</feature>
<proteinExistence type="inferred from homology"/>
<organism>
    <name type="scientific">Ralstonia nicotianae (strain ATCC BAA-1114 / GMI1000)</name>
    <name type="common">Ralstonia solanacearum</name>
    <dbReference type="NCBI Taxonomy" id="267608"/>
    <lineage>
        <taxon>Bacteria</taxon>
        <taxon>Pseudomonadati</taxon>
        <taxon>Pseudomonadota</taxon>
        <taxon>Betaproteobacteria</taxon>
        <taxon>Burkholderiales</taxon>
        <taxon>Burkholderiaceae</taxon>
        <taxon>Ralstonia</taxon>
        <taxon>Ralstonia solanacearum species complex</taxon>
    </lineage>
</organism>
<accession>Q8Y1W3</accession>
<dbReference type="EC" id="6.3.2.6" evidence="1"/>
<dbReference type="EMBL" id="AL646052">
    <property type="protein sequence ID" value="CAD14104.1"/>
    <property type="molecule type" value="Genomic_DNA"/>
</dbReference>
<dbReference type="SMR" id="Q8Y1W3"/>
<dbReference type="STRING" id="267608.RSc0574"/>
<dbReference type="EnsemblBacteria" id="CAD14104">
    <property type="protein sequence ID" value="CAD14104"/>
    <property type="gene ID" value="RSc0574"/>
</dbReference>
<dbReference type="KEGG" id="rso:RSc0574"/>
<dbReference type="eggNOG" id="COG0152">
    <property type="taxonomic scope" value="Bacteria"/>
</dbReference>
<dbReference type="HOGENOM" id="CLU_045637_0_0_4"/>
<dbReference type="UniPathway" id="UPA00074">
    <property type="reaction ID" value="UER00131"/>
</dbReference>
<dbReference type="Proteomes" id="UP000001436">
    <property type="component" value="Chromosome"/>
</dbReference>
<dbReference type="GO" id="GO:0005737">
    <property type="term" value="C:cytoplasm"/>
    <property type="evidence" value="ECO:0007669"/>
    <property type="project" value="TreeGrafter"/>
</dbReference>
<dbReference type="GO" id="GO:0005524">
    <property type="term" value="F:ATP binding"/>
    <property type="evidence" value="ECO:0007669"/>
    <property type="project" value="UniProtKB-KW"/>
</dbReference>
<dbReference type="GO" id="GO:0004639">
    <property type="term" value="F:phosphoribosylaminoimidazolesuccinocarboxamide synthase activity"/>
    <property type="evidence" value="ECO:0007669"/>
    <property type="project" value="UniProtKB-UniRule"/>
</dbReference>
<dbReference type="GO" id="GO:0006189">
    <property type="term" value="P:'de novo' IMP biosynthetic process"/>
    <property type="evidence" value="ECO:0007669"/>
    <property type="project" value="UniProtKB-UniRule"/>
</dbReference>
<dbReference type="CDD" id="cd01414">
    <property type="entry name" value="SAICAR_synt_Sc"/>
    <property type="match status" value="1"/>
</dbReference>
<dbReference type="FunFam" id="3.30.470.20:FF:000015">
    <property type="entry name" value="Phosphoribosylaminoimidazole-succinocarboxamide synthase"/>
    <property type="match status" value="1"/>
</dbReference>
<dbReference type="Gene3D" id="3.30.470.20">
    <property type="entry name" value="ATP-grasp fold, B domain"/>
    <property type="match status" value="1"/>
</dbReference>
<dbReference type="Gene3D" id="3.30.200.20">
    <property type="entry name" value="Phosphorylase Kinase, domain 1"/>
    <property type="match status" value="1"/>
</dbReference>
<dbReference type="HAMAP" id="MF_00137">
    <property type="entry name" value="SAICAR_synth"/>
    <property type="match status" value="1"/>
</dbReference>
<dbReference type="InterPro" id="IPR028923">
    <property type="entry name" value="SAICAR_synt/ADE2_N"/>
</dbReference>
<dbReference type="InterPro" id="IPR001636">
    <property type="entry name" value="SAICAR_synth"/>
</dbReference>
<dbReference type="InterPro" id="IPR018236">
    <property type="entry name" value="SAICAR_synthetase_CS"/>
</dbReference>
<dbReference type="NCBIfam" id="NF010568">
    <property type="entry name" value="PRK13961.1"/>
    <property type="match status" value="1"/>
</dbReference>
<dbReference type="NCBIfam" id="TIGR00081">
    <property type="entry name" value="purC"/>
    <property type="match status" value="1"/>
</dbReference>
<dbReference type="PANTHER" id="PTHR43700">
    <property type="entry name" value="PHOSPHORIBOSYLAMINOIMIDAZOLE-SUCCINOCARBOXAMIDE SYNTHASE"/>
    <property type="match status" value="1"/>
</dbReference>
<dbReference type="PANTHER" id="PTHR43700:SF1">
    <property type="entry name" value="PHOSPHORIBOSYLAMINOIMIDAZOLE-SUCCINOCARBOXAMIDE SYNTHASE"/>
    <property type="match status" value="1"/>
</dbReference>
<dbReference type="Pfam" id="PF01259">
    <property type="entry name" value="SAICAR_synt"/>
    <property type="match status" value="1"/>
</dbReference>
<dbReference type="SUPFAM" id="SSF56104">
    <property type="entry name" value="SAICAR synthase-like"/>
    <property type="match status" value="1"/>
</dbReference>
<dbReference type="PROSITE" id="PS01057">
    <property type="entry name" value="SAICAR_SYNTHETASE_1"/>
    <property type="match status" value="1"/>
</dbReference>
<dbReference type="PROSITE" id="PS01058">
    <property type="entry name" value="SAICAR_SYNTHETASE_2"/>
    <property type="match status" value="1"/>
</dbReference>
<evidence type="ECO:0000255" key="1">
    <source>
        <dbReference type="HAMAP-Rule" id="MF_00137"/>
    </source>
</evidence>
<reference key="1">
    <citation type="journal article" date="2002" name="Nature">
        <title>Genome sequence of the plant pathogen Ralstonia solanacearum.</title>
        <authorList>
            <person name="Salanoubat M."/>
            <person name="Genin S."/>
            <person name="Artiguenave F."/>
            <person name="Gouzy J."/>
            <person name="Mangenot S."/>
            <person name="Arlat M."/>
            <person name="Billault A."/>
            <person name="Brottier P."/>
            <person name="Camus J.-C."/>
            <person name="Cattolico L."/>
            <person name="Chandler M."/>
            <person name="Choisne N."/>
            <person name="Claudel-Renard C."/>
            <person name="Cunnac S."/>
            <person name="Demange N."/>
            <person name="Gaspin C."/>
            <person name="Lavie M."/>
            <person name="Moisan A."/>
            <person name="Robert C."/>
            <person name="Saurin W."/>
            <person name="Schiex T."/>
            <person name="Siguier P."/>
            <person name="Thebault P."/>
            <person name="Whalen M."/>
            <person name="Wincker P."/>
            <person name="Levy M."/>
            <person name="Weissenbach J."/>
            <person name="Boucher C.A."/>
        </authorList>
    </citation>
    <scope>NUCLEOTIDE SEQUENCE [LARGE SCALE GENOMIC DNA]</scope>
    <source>
        <strain>ATCC BAA-1114 / GMI1000</strain>
    </source>
</reference>
<sequence length="302" mass="33375">MSSALYESSITSLPLLGRGKVRENYAVGDDKLLMVTTDRLSAFDVILGQPIPDKGRVLAQMSDFWFRKLRHIVPTHETGIAPEAVVQPGEADQVRGRAIVVKRLKPILVEAVVRGYLAGSGWKDYQATGKVCGVQLAPGLRNAEKLPEPIFTPAAKADVGEHDENISFDEVERRIGPELAAQIRDVSIRLYKEASDFAATRGIIIADTKFEFGLDENGTLTLMDEALTADSSRFWPADSYQVGTNPPSFDKQFVRDWLEAVRIDGQPWPKTAPAPQLPADIIEKTADKYREALTRLTGETLR</sequence>